<gene>
    <name evidence="1" type="primary">trpS</name>
    <name type="ordered locus">MYPU_7450</name>
</gene>
<sequence>MNKKTLVSGITSTGKLTLGNYIGAIRNFVKLQDEFNMFIFVADLHSLTNEIVPSVLRKNIKEIAALYLACGLDPEKTVLFKQSDVYEHGLMQWILLNQTTIGELSRMTQFKDKSSKITHANNTESIPSGLLTYPTLMAADILLYNPNLVPVGQDQVQHLELTRKIARKLNNKYNTKFNEPTTFVPETGAKIMSLTNPTKKMSKSSDDINGTIFLLEDPELAYKKIKKSITDSENKVYHDPSKPGVSNLLEIYACLENKSLKEAQEIFKDKNYLELKEGVGNSVKNFLTKLQAKYQENYKRVDEILNQGKIKAQKVASYNLNNLMKKIGIRDK</sequence>
<feature type="chain" id="PRO_0000136649" description="Tryptophan--tRNA ligase">
    <location>
        <begin position="1"/>
        <end position="332"/>
    </location>
</feature>
<feature type="short sequence motif" description="'HIGH' region" evidence="1">
    <location>
        <begin position="12"/>
        <end position="20"/>
    </location>
</feature>
<feature type="short sequence motif" description="'KMSKS' region" evidence="1">
    <location>
        <begin position="200"/>
        <end position="204"/>
    </location>
</feature>
<feature type="binding site" evidence="1">
    <location>
        <begin position="11"/>
        <end position="13"/>
    </location>
    <ligand>
        <name>ATP</name>
        <dbReference type="ChEBI" id="CHEBI:30616"/>
    </ligand>
</feature>
<feature type="binding site" evidence="1">
    <location>
        <begin position="19"/>
        <end position="20"/>
    </location>
    <ligand>
        <name>ATP</name>
        <dbReference type="ChEBI" id="CHEBI:30616"/>
    </ligand>
</feature>
<feature type="binding site" evidence="1">
    <location>
        <position position="140"/>
    </location>
    <ligand>
        <name>L-tryptophan</name>
        <dbReference type="ChEBI" id="CHEBI:57912"/>
    </ligand>
</feature>
<feature type="binding site" evidence="1">
    <location>
        <begin position="152"/>
        <end position="154"/>
    </location>
    <ligand>
        <name>ATP</name>
        <dbReference type="ChEBI" id="CHEBI:30616"/>
    </ligand>
</feature>
<feature type="binding site" evidence="1">
    <location>
        <position position="191"/>
    </location>
    <ligand>
        <name>ATP</name>
        <dbReference type="ChEBI" id="CHEBI:30616"/>
    </ligand>
</feature>
<feature type="binding site" evidence="1">
    <location>
        <begin position="200"/>
        <end position="204"/>
    </location>
    <ligand>
        <name>ATP</name>
        <dbReference type="ChEBI" id="CHEBI:30616"/>
    </ligand>
</feature>
<protein>
    <recommendedName>
        <fullName evidence="1">Tryptophan--tRNA ligase</fullName>
        <ecNumber evidence="1">6.1.1.2</ecNumber>
    </recommendedName>
    <alternativeName>
        <fullName evidence="1">Tryptophanyl-tRNA synthetase</fullName>
        <shortName evidence="1">TrpRS</shortName>
    </alternativeName>
</protein>
<evidence type="ECO:0000255" key="1">
    <source>
        <dbReference type="HAMAP-Rule" id="MF_00140"/>
    </source>
</evidence>
<comment type="function">
    <text evidence="1">Catalyzes the attachment of tryptophan to tRNA(Trp).</text>
</comment>
<comment type="catalytic activity">
    <reaction evidence="1">
        <text>tRNA(Trp) + L-tryptophan + ATP = L-tryptophyl-tRNA(Trp) + AMP + diphosphate + H(+)</text>
        <dbReference type="Rhea" id="RHEA:24080"/>
        <dbReference type="Rhea" id="RHEA-COMP:9671"/>
        <dbReference type="Rhea" id="RHEA-COMP:9705"/>
        <dbReference type="ChEBI" id="CHEBI:15378"/>
        <dbReference type="ChEBI" id="CHEBI:30616"/>
        <dbReference type="ChEBI" id="CHEBI:33019"/>
        <dbReference type="ChEBI" id="CHEBI:57912"/>
        <dbReference type="ChEBI" id="CHEBI:78442"/>
        <dbReference type="ChEBI" id="CHEBI:78535"/>
        <dbReference type="ChEBI" id="CHEBI:456215"/>
        <dbReference type="EC" id="6.1.1.2"/>
    </reaction>
</comment>
<comment type="subunit">
    <text evidence="1">Homodimer.</text>
</comment>
<comment type="subcellular location">
    <subcellularLocation>
        <location evidence="1">Cytoplasm</location>
    </subcellularLocation>
</comment>
<comment type="similarity">
    <text evidence="1">Belongs to the class-I aminoacyl-tRNA synthetase family.</text>
</comment>
<name>SYW_MYCPU</name>
<dbReference type="EC" id="6.1.1.2" evidence="1"/>
<dbReference type="EMBL" id="AL445565">
    <property type="protein sequence ID" value="CAC13918.1"/>
    <property type="molecule type" value="Genomic_DNA"/>
</dbReference>
<dbReference type="PIR" id="A99605">
    <property type="entry name" value="A99605"/>
</dbReference>
<dbReference type="RefSeq" id="WP_010925546.1">
    <property type="nucleotide sequence ID" value="NC_002771.1"/>
</dbReference>
<dbReference type="SMR" id="Q98PH7"/>
<dbReference type="STRING" id="272635.gene:17577356"/>
<dbReference type="KEGG" id="mpu:MYPU_7450"/>
<dbReference type="eggNOG" id="COG0180">
    <property type="taxonomic scope" value="Bacteria"/>
</dbReference>
<dbReference type="HOGENOM" id="CLU_029244_1_1_14"/>
<dbReference type="BioCyc" id="MPUL272635:G1GT6-756-MONOMER"/>
<dbReference type="Proteomes" id="UP000000528">
    <property type="component" value="Chromosome"/>
</dbReference>
<dbReference type="GO" id="GO:0005829">
    <property type="term" value="C:cytosol"/>
    <property type="evidence" value="ECO:0007669"/>
    <property type="project" value="TreeGrafter"/>
</dbReference>
<dbReference type="GO" id="GO:0005524">
    <property type="term" value="F:ATP binding"/>
    <property type="evidence" value="ECO:0007669"/>
    <property type="project" value="UniProtKB-UniRule"/>
</dbReference>
<dbReference type="GO" id="GO:0004830">
    <property type="term" value="F:tryptophan-tRNA ligase activity"/>
    <property type="evidence" value="ECO:0007669"/>
    <property type="project" value="UniProtKB-UniRule"/>
</dbReference>
<dbReference type="GO" id="GO:0006436">
    <property type="term" value="P:tryptophanyl-tRNA aminoacylation"/>
    <property type="evidence" value="ECO:0007669"/>
    <property type="project" value="UniProtKB-UniRule"/>
</dbReference>
<dbReference type="CDD" id="cd00806">
    <property type="entry name" value="TrpRS_core"/>
    <property type="match status" value="1"/>
</dbReference>
<dbReference type="Gene3D" id="3.40.50.620">
    <property type="entry name" value="HUPs"/>
    <property type="match status" value="1"/>
</dbReference>
<dbReference type="Gene3D" id="1.10.240.10">
    <property type="entry name" value="Tyrosyl-Transfer RNA Synthetase"/>
    <property type="match status" value="1"/>
</dbReference>
<dbReference type="HAMAP" id="MF_00140_B">
    <property type="entry name" value="Trp_tRNA_synth_B"/>
    <property type="match status" value="1"/>
</dbReference>
<dbReference type="InterPro" id="IPR002305">
    <property type="entry name" value="aa-tRNA-synth_Ic"/>
</dbReference>
<dbReference type="InterPro" id="IPR014729">
    <property type="entry name" value="Rossmann-like_a/b/a_fold"/>
</dbReference>
<dbReference type="InterPro" id="IPR002306">
    <property type="entry name" value="Trp-tRNA-ligase"/>
</dbReference>
<dbReference type="InterPro" id="IPR024109">
    <property type="entry name" value="Trp-tRNA-ligase_bac-type"/>
</dbReference>
<dbReference type="InterPro" id="IPR050203">
    <property type="entry name" value="Trp-tRNA_synthetase"/>
</dbReference>
<dbReference type="NCBIfam" id="TIGR00233">
    <property type="entry name" value="trpS"/>
    <property type="match status" value="1"/>
</dbReference>
<dbReference type="PANTHER" id="PTHR43766">
    <property type="entry name" value="TRYPTOPHAN--TRNA LIGASE, MITOCHONDRIAL"/>
    <property type="match status" value="1"/>
</dbReference>
<dbReference type="PANTHER" id="PTHR43766:SF1">
    <property type="entry name" value="TRYPTOPHAN--TRNA LIGASE, MITOCHONDRIAL"/>
    <property type="match status" value="1"/>
</dbReference>
<dbReference type="Pfam" id="PF00579">
    <property type="entry name" value="tRNA-synt_1b"/>
    <property type="match status" value="1"/>
</dbReference>
<dbReference type="PRINTS" id="PR01039">
    <property type="entry name" value="TRNASYNTHTRP"/>
</dbReference>
<dbReference type="SUPFAM" id="SSF52374">
    <property type="entry name" value="Nucleotidylyl transferase"/>
    <property type="match status" value="1"/>
</dbReference>
<keyword id="KW-0030">Aminoacyl-tRNA synthetase</keyword>
<keyword id="KW-0067">ATP-binding</keyword>
<keyword id="KW-0963">Cytoplasm</keyword>
<keyword id="KW-0436">Ligase</keyword>
<keyword id="KW-0547">Nucleotide-binding</keyword>
<keyword id="KW-0648">Protein biosynthesis</keyword>
<keyword id="KW-1185">Reference proteome</keyword>
<accession>Q98PH7</accession>
<organism>
    <name type="scientific">Mycoplasmopsis pulmonis (strain UAB CTIP)</name>
    <name type="common">Mycoplasma pulmonis</name>
    <dbReference type="NCBI Taxonomy" id="272635"/>
    <lineage>
        <taxon>Bacteria</taxon>
        <taxon>Bacillati</taxon>
        <taxon>Mycoplasmatota</taxon>
        <taxon>Mycoplasmoidales</taxon>
        <taxon>Metamycoplasmataceae</taxon>
        <taxon>Mycoplasmopsis</taxon>
    </lineage>
</organism>
<proteinExistence type="inferred from homology"/>
<reference key="1">
    <citation type="journal article" date="2001" name="Nucleic Acids Res.">
        <title>The complete genome sequence of the murine respiratory pathogen Mycoplasma pulmonis.</title>
        <authorList>
            <person name="Chambaud I."/>
            <person name="Heilig R."/>
            <person name="Ferris S."/>
            <person name="Barbe V."/>
            <person name="Samson D."/>
            <person name="Galisson F."/>
            <person name="Moszer I."/>
            <person name="Dybvig K."/>
            <person name="Wroblewski H."/>
            <person name="Viari A."/>
            <person name="Rocha E.P.C."/>
            <person name="Blanchard A."/>
        </authorList>
    </citation>
    <scope>NUCLEOTIDE SEQUENCE [LARGE SCALE GENOMIC DNA]</scope>
    <source>
        <strain>UAB CTIP</strain>
    </source>
</reference>